<protein>
    <recommendedName>
        <fullName evidence="1">Large ribosomal subunit protein uL4</fullName>
    </recommendedName>
    <alternativeName>
        <fullName evidence="3">50S ribosomal protein L4</fullName>
    </alternativeName>
</protein>
<accession>A4IJJ0</accession>
<organism>
    <name type="scientific">Geobacillus thermodenitrificans (strain NG80-2)</name>
    <dbReference type="NCBI Taxonomy" id="420246"/>
    <lineage>
        <taxon>Bacteria</taxon>
        <taxon>Bacillati</taxon>
        <taxon>Bacillota</taxon>
        <taxon>Bacilli</taxon>
        <taxon>Bacillales</taxon>
        <taxon>Anoxybacillaceae</taxon>
        <taxon>Geobacillus</taxon>
    </lineage>
</organism>
<gene>
    <name evidence="1" type="primary">rplD</name>
    <name type="ordered locus">GTNG_0107</name>
</gene>
<comment type="function">
    <text evidence="1">One of the primary rRNA binding proteins, this protein initially binds near the 5'-end of the 23S rRNA. It is important during the early stages of 50S assembly. It makes multiple contacts with different domains of the 23S rRNA in the assembled 50S subunit and ribosome.</text>
</comment>
<comment type="function">
    <text evidence="1">Forms part of the polypeptide exit tunnel.</text>
</comment>
<comment type="subunit">
    <text evidence="1">Part of the 50S ribosomal subunit.</text>
</comment>
<comment type="similarity">
    <text evidence="1">Belongs to the universal ribosomal protein uL4 family.</text>
</comment>
<sequence>MPKVALYNQNGQTIGEIELNDAVFGIEPNKHVLFEAVIMQRASMRQGTHKTKNRAEVSGGGRKPWRQKGTGRARQGSIRSPQWRGGGTVFGPVPRSYSYKLPKKVRRLAIKSALSSKVLENDIVVLDQLSLEAPKTKEMVKILNNLAVDRKALIVTDELNENVYLSARNIPGVKVVAANGINVLDVLSHDKLVITKAAVEKVEEVLA</sequence>
<keyword id="KW-0687">Ribonucleoprotein</keyword>
<keyword id="KW-0689">Ribosomal protein</keyword>
<keyword id="KW-0694">RNA-binding</keyword>
<keyword id="KW-0699">rRNA-binding</keyword>
<feature type="chain" id="PRO_1000052406" description="Large ribosomal subunit protein uL4">
    <location>
        <begin position="1"/>
        <end position="207"/>
    </location>
</feature>
<feature type="region of interest" description="Disordered" evidence="2">
    <location>
        <begin position="44"/>
        <end position="85"/>
    </location>
</feature>
<evidence type="ECO:0000255" key="1">
    <source>
        <dbReference type="HAMAP-Rule" id="MF_01328"/>
    </source>
</evidence>
<evidence type="ECO:0000256" key="2">
    <source>
        <dbReference type="SAM" id="MobiDB-lite"/>
    </source>
</evidence>
<evidence type="ECO:0000305" key="3"/>
<name>RL4_GEOTN</name>
<reference key="1">
    <citation type="journal article" date="2007" name="Proc. Natl. Acad. Sci. U.S.A.">
        <title>Genome and proteome of long-chain alkane degrading Geobacillus thermodenitrificans NG80-2 isolated from a deep-subsurface oil reservoir.</title>
        <authorList>
            <person name="Feng L."/>
            <person name="Wang W."/>
            <person name="Cheng J."/>
            <person name="Ren Y."/>
            <person name="Zhao G."/>
            <person name="Gao C."/>
            <person name="Tang Y."/>
            <person name="Liu X."/>
            <person name="Han W."/>
            <person name="Peng X."/>
            <person name="Liu R."/>
            <person name="Wang L."/>
        </authorList>
    </citation>
    <scope>NUCLEOTIDE SEQUENCE [LARGE SCALE GENOMIC DNA]</scope>
    <source>
        <strain>NG80-2</strain>
    </source>
</reference>
<dbReference type="EMBL" id="CP000557">
    <property type="protein sequence ID" value="ABO65494.1"/>
    <property type="molecule type" value="Genomic_DNA"/>
</dbReference>
<dbReference type="RefSeq" id="WP_011886630.1">
    <property type="nucleotide sequence ID" value="NC_009328.1"/>
</dbReference>
<dbReference type="SMR" id="A4IJJ0"/>
<dbReference type="KEGG" id="gtn:GTNG_0107"/>
<dbReference type="eggNOG" id="COG0088">
    <property type="taxonomic scope" value="Bacteria"/>
</dbReference>
<dbReference type="HOGENOM" id="CLU_041575_5_2_9"/>
<dbReference type="Proteomes" id="UP000001578">
    <property type="component" value="Chromosome"/>
</dbReference>
<dbReference type="GO" id="GO:1990904">
    <property type="term" value="C:ribonucleoprotein complex"/>
    <property type="evidence" value="ECO:0007669"/>
    <property type="project" value="UniProtKB-KW"/>
</dbReference>
<dbReference type="GO" id="GO:0005840">
    <property type="term" value="C:ribosome"/>
    <property type="evidence" value="ECO:0007669"/>
    <property type="project" value="UniProtKB-KW"/>
</dbReference>
<dbReference type="GO" id="GO:0019843">
    <property type="term" value="F:rRNA binding"/>
    <property type="evidence" value="ECO:0007669"/>
    <property type="project" value="UniProtKB-UniRule"/>
</dbReference>
<dbReference type="GO" id="GO:0003735">
    <property type="term" value="F:structural constituent of ribosome"/>
    <property type="evidence" value="ECO:0007669"/>
    <property type="project" value="InterPro"/>
</dbReference>
<dbReference type="GO" id="GO:0006412">
    <property type="term" value="P:translation"/>
    <property type="evidence" value="ECO:0007669"/>
    <property type="project" value="UniProtKB-UniRule"/>
</dbReference>
<dbReference type="FunFam" id="3.40.1370.10:FF:000003">
    <property type="entry name" value="50S ribosomal protein L4"/>
    <property type="match status" value="1"/>
</dbReference>
<dbReference type="Gene3D" id="3.40.1370.10">
    <property type="match status" value="1"/>
</dbReference>
<dbReference type="HAMAP" id="MF_01328_B">
    <property type="entry name" value="Ribosomal_uL4_B"/>
    <property type="match status" value="1"/>
</dbReference>
<dbReference type="InterPro" id="IPR002136">
    <property type="entry name" value="Ribosomal_uL4"/>
</dbReference>
<dbReference type="InterPro" id="IPR013005">
    <property type="entry name" value="Ribosomal_uL4-like"/>
</dbReference>
<dbReference type="InterPro" id="IPR023574">
    <property type="entry name" value="Ribosomal_uL4_dom_sf"/>
</dbReference>
<dbReference type="NCBIfam" id="TIGR03953">
    <property type="entry name" value="rplD_bact"/>
    <property type="match status" value="1"/>
</dbReference>
<dbReference type="PANTHER" id="PTHR10746">
    <property type="entry name" value="50S RIBOSOMAL PROTEIN L4"/>
    <property type="match status" value="1"/>
</dbReference>
<dbReference type="PANTHER" id="PTHR10746:SF6">
    <property type="entry name" value="LARGE RIBOSOMAL SUBUNIT PROTEIN UL4M"/>
    <property type="match status" value="1"/>
</dbReference>
<dbReference type="Pfam" id="PF00573">
    <property type="entry name" value="Ribosomal_L4"/>
    <property type="match status" value="1"/>
</dbReference>
<dbReference type="SUPFAM" id="SSF52166">
    <property type="entry name" value="Ribosomal protein L4"/>
    <property type="match status" value="1"/>
</dbReference>
<proteinExistence type="inferred from homology"/>